<sequence>MVIKAQSPAGFAEEYIIESIWNNRFPPGTILPAERELSELIGVTRTTLREVLQRLARDGWLTIQHGKPTKVNNFWETSGLNILETLARLDHESVPQLIDNLLSVRTNISTIFIRTAFRQHPDKAQEVLATANEVADHADAFAELDYNIFRGLAFASGNPIYGLILNGMKGLYTRIGRHYFANPEARSLALGFYHKLSALCSEGAHDQVYETVRRYGHESGEIWHRMQKNLPGDLAIQGR</sequence>
<feature type="chain" id="PRO_1000201043" description="Fatty acid metabolism regulator protein">
    <location>
        <begin position="1"/>
        <end position="239"/>
    </location>
</feature>
<feature type="domain" description="HTH gntR-type" evidence="1">
    <location>
        <begin position="6"/>
        <end position="74"/>
    </location>
</feature>
<feature type="DNA-binding region" description="H-T-H motif" evidence="1">
    <location>
        <begin position="34"/>
        <end position="53"/>
    </location>
</feature>
<evidence type="ECO:0000255" key="1">
    <source>
        <dbReference type="HAMAP-Rule" id="MF_00696"/>
    </source>
</evidence>
<dbReference type="EMBL" id="FM180568">
    <property type="protein sequence ID" value="CAS08854.1"/>
    <property type="molecule type" value="Genomic_DNA"/>
</dbReference>
<dbReference type="RefSeq" id="WP_000234823.1">
    <property type="nucleotide sequence ID" value="NC_011601.1"/>
</dbReference>
<dbReference type="SMR" id="B7UQ71"/>
<dbReference type="GeneID" id="93776245"/>
<dbReference type="KEGG" id="ecg:E2348C_1306"/>
<dbReference type="HOGENOM" id="CLU_017584_9_4_6"/>
<dbReference type="Proteomes" id="UP000008205">
    <property type="component" value="Chromosome"/>
</dbReference>
<dbReference type="GO" id="GO:0005737">
    <property type="term" value="C:cytoplasm"/>
    <property type="evidence" value="ECO:0007669"/>
    <property type="project" value="UniProtKB-SubCell"/>
</dbReference>
<dbReference type="GO" id="GO:0003677">
    <property type="term" value="F:DNA binding"/>
    <property type="evidence" value="ECO:0007669"/>
    <property type="project" value="UniProtKB-KW"/>
</dbReference>
<dbReference type="GO" id="GO:0003700">
    <property type="term" value="F:DNA-binding transcription factor activity"/>
    <property type="evidence" value="ECO:0007669"/>
    <property type="project" value="UniProtKB-UniRule"/>
</dbReference>
<dbReference type="GO" id="GO:0000062">
    <property type="term" value="F:fatty-acyl-CoA binding"/>
    <property type="evidence" value="ECO:0007669"/>
    <property type="project" value="InterPro"/>
</dbReference>
<dbReference type="GO" id="GO:0006631">
    <property type="term" value="P:fatty acid metabolic process"/>
    <property type="evidence" value="ECO:0007669"/>
    <property type="project" value="UniProtKB-KW"/>
</dbReference>
<dbReference type="GO" id="GO:0019217">
    <property type="term" value="P:regulation of fatty acid metabolic process"/>
    <property type="evidence" value="ECO:0007669"/>
    <property type="project" value="UniProtKB-UniRule"/>
</dbReference>
<dbReference type="CDD" id="cd07377">
    <property type="entry name" value="WHTH_GntR"/>
    <property type="match status" value="1"/>
</dbReference>
<dbReference type="FunFam" id="1.10.10.10:FF:000036">
    <property type="entry name" value="Fatty acid metabolism regulator protein"/>
    <property type="match status" value="1"/>
</dbReference>
<dbReference type="FunFam" id="1.20.120.530:FF:000003">
    <property type="entry name" value="Fatty acid metabolism regulator protein"/>
    <property type="match status" value="1"/>
</dbReference>
<dbReference type="Gene3D" id="1.20.120.530">
    <property type="entry name" value="GntR ligand-binding domain-like"/>
    <property type="match status" value="1"/>
</dbReference>
<dbReference type="Gene3D" id="1.10.10.10">
    <property type="entry name" value="Winged helix-like DNA-binding domain superfamily/Winged helix DNA-binding domain"/>
    <property type="match status" value="1"/>
</dbReference>
<dbReference type="HAMAP" id="MF_00696">
    <property type="entry name" value="HTH_FadR"/>
    <property type="match status" value="1"/>
</dbReference>
<dbReference type="InterPro" id="IPR014178">
    <property type="entry name" value="FA-response_TF_FadR"/>
</dbReference>
<dbReference type="InterPro" id="IPR028374">
    <property type="entry name" value="FadR_C"/>
</dbReference>
<dbReference type="InterPro" id="IPR008920">
    <property type="entry name" value="TF_FadR/GntR_C"/>
</dbReference>
<dbReference type="InterPro" id="IPR000524">
    <property type="entry name" value="Tscrpt_reg_HTH_GntR"/>
</dbReference>
<dbReference type="InterPro" id="IPR036388">
    <property type="entry name" value="WH-like_DNA-bd_sf"/>
</dbReference>
<dbReference type="InterPro" id="IPR036390">
    <property type="entry name" value="WH_DNA-bd_sf"/>
</dbReference>
<dbReference type="NCBIfam" id="TIGR02812">
    <property type="entry name" value="fadR_gamma"/>
    <property type="match status" value="1"/>
</dbReference>
<dbReference type="NCBIfam" id="NF003444">
    <property type="entry name" value="PRK04984.1"/>
    <property type="match status" value="1"/>
</dbReference>
<dbReference type="PANTHER" id="PTHR43537:SF52">
    <property type="entry name" value="FATTY ACID METABOLISM REGULATOR PROTEIN"/>
    <property type="match status" value="1"/>
</dbReference>
<dbReference type="PANTHER" id="PTHR43537">
    <property type="entry name" value="TRANSCRIPTIONAL REGULATOR, GNTR FAMILY"/>
    <property type="match status" value="1"/>
</dbReference>
<dbReference type="Pfam" id="PF07840">
    <property type="entry name" value="FadR_C"/>
    <property type="match status" value="1"/>
</dbReference>
<dbReference type="Pfam" id="PF00392">
    <property type="entry name" value="GntR"/>
    <property type="match status" value="1"/>
</dbReference>
<dbReference type="PRINTS" id="PR00035">
    <property type="entry name" value="HTHGNTR"/>
</dbReference>
<dbReference type="SMART" id="SM00345">
    <property type="entry name" value="HTH_GNTR"/>
    <property type="match status" value="1"/>
</dbReference>
<dbReference type="SUPFAM" id="SSF48008">
    <property type="entry name" value="GntR ligand-binding domain-like"/>
    <property type="match status" value="1"/>
</dbReference>
<dbReference type="SUPFAM" id="SSF46785">
    <property type="entry name" value="Winged helix' DNA-binding domain"/>
    <property type="match status" value="1"/>
</dbReference>
<dbReference type="PROSITE" id="PS50949">
    <property type="entry name" value="HTH_GNTR"/>
    <property type="match status" value="1"/>
</dbReference>
<organism>
    <name type="scientific">Escherichia coli O127:H6 (strain E2348/69 / EPEC)</name>
    <dbReference type="NCBI Taxonomy" id="574521"/>
    <lineage>
        <taxon>Bacteria</taxon>
        <taxon>Pseudomonadati</taxon>
        <taxon>Pseudomonadota</taxon>
        <taxon>Gammaproteobacteria</taxon>
        <taxon>Enterobacterales</taxon>
        <taxon>Enterobacteriaceae</taxon>
        <taxon>Escherichia</taxon>
    </lineage>
</organism>
<keyword id="KW-0010">Activator</keyword>
<keyword id="KW-0963">Cytoplasm</keyword>
<keyword id="KW-0238">DNA-binding</keyword>
<keyword id="KW-0276">Fatty acid metabolism</keyword>
<keyword id="KW-0443">Lipid metabolism</keyword>
<keyword id="KW-1185">Reference proteome</keyword>
<keyword id="KW-0678">Repressor</keyword>
<keyword id="KW-0804">Transcription</keyword>
<keyword id="KW-0805">Transcription regulation</keyword>
<gene>
    <name evidence="1" type="primary">fadR</name>
    <name type="ordered locus">E2348C_1306</name>
</gene>
<protein>
    <recommendedName>
        <fullName evidence="1">Fatty acid metabolism regulator protein</fullName>
    </recommendedName>
</protein>
<proteinExistence type="inferred from homology"/>
<comment type="function">
    <text evidence="1">Multifunctional regulator of fatty acid metabolism.</text>
</comment>
<comment type="subunit">
    <text evidence="1">Homodimer.</text>
</comment>
<comment type="subcellular location">
    <subcellularLocation>
        <location evidence="1">Cytoplasm</location>
    </subcellularLocation>
</comment>
<reference key="1">
    <citation type="journal article" date="2009" name="J. Bacteriol.">
        <title>Complete genome sequence and comparative genome analysis of enteropathogenic Escherichia coli O127:H6 strain E2348/69.</title>
        <authorList>
            <person name="Iguchi A."/>
            <person name="Thomson N.R."/>
            <person name="Ogura Y."/>
            <person name="Saunders D."/>
            <person name="Ooka T."/>
            <person name="Henderson I.R."/>
            <person name="Harris D."/>
            <person name="Asadulghani M."/>
            <person name="Kurokawa K."/>
            <person name="Dean P."/>
            <person name="Kenny B."/>
            <person name="Quail M.A."/>
            <person name="Thurston S."/>
            <person name="Dougan G."/>
            <person name="Hayashi T."/>
            <person name="Parkhill J."/>
            <person name="Frankel G."/>
        </authorList>
    </citation>
    <scope>NUCLEOTIDE SEQUENCE [LARGE SCALE GENOMIC DNA]</scope>
    <source>
        <strain>E2348/69 / EPEC</strain>
    </source>
</reference>
<accession>B7UQ71</accession>
<name>FADR_ECO27</name>